<accession>B3WA39</accession>
<comment type="function">
    <text evidence="1">Catalyzes the attachment of glutamate to tRNA(Glu) in a two-step reaction: glutamate is first activated by ATP to form Glu-AMP and then transferred to the acceptor end of tRNA(Glu).</text>
</comment>
<comment type="catalytic activity">
    <reaction evidence="1">
        <text>tRNA(Glu) + L-glutamate + ATP = L-glutamyl-tRNA(Glu) + AMP + diphosphate</text>
        <dbReference type="Rhea" id="RHEA:23540"/>
        <dbReference type="Rhea" id="RHEA-COMP:9663"/>
        <dbReference type="Rhea" id="RHEA-COMP:9680"/>
        <dbReference type="ChEBI" id="CHEBI:29985"/>
        <dbReference type="ChEBI" id="CHEBI:30616"/>
        <dbReference type="ChEBI" id="CHEBI:33019"/>
        <dbReference type="ChEBI" id="CHEBI:78442"/>
        <dbReference type="ChEBI" id="CHEBI:78520"/>
        <dbReference type="ChEBI" id="CHEBI:456215"/>
        <dbReference type="EC" id="6.1.1.17"/>
    </reaction>
</comment>
<comment type="subunit">
    <text evidence="1">Monomer.</text>
</comment>
<comment type="subcellular location">
    <subcellularLocation>
        <location evidence="1">Cytoplasm</location>
    </subcellularLocation>
</comment>
<comment type="similarity">
    <text evidence="1">Belongs to the class-I aminoacyl-tRNA synthetase family. Glutamate--tRNA ligase type 1 subfamily.</text>
</comment>
<reference key="1">
    <citation type="submission" date="2008-06" db="EMBL/GenBank/DDBJ databases">
        <title>Lactobacillus casei BL23 complete genome sequence.</title>
        <authorList>
            <person name="Maze A."/>
            <person name="Boel G."/>
            <person name="Bourand A."/>
            <person name="Loux V."/>
            <person name="Gibrat J.F."/>
            <person name="Zuniga M."/>
            <person name="Hartke A."/>
            <person name="Deutscher J."/>
        </authorList>
    </citation>
    <scope>NUCLEOTIDE SEQUENCE [LARGE SCALE GENOMIC DNA]</scope>
    <source>
        <strain>BL23</strain>
    </source>
</reference>
<evidence type="ECO:0000255" key="1">
    <source>
        <dbReference type="HAMAP-Rule" id="MF_00022"/>
    </source>
</evidence>
<organism>
    <name type="scientific">Lacticaseibacillus casei (strain BL23)</name>
    <name type="common">Lactobacillus casei</name>
    <dbReference type="NCBI Taxonomy" id="543734"/>
    <lineage>
        <taxon>Bacteria</taxon>
        <taxon>Bacillati</taxon>
        <taxon>Bacillota</taxon>
        <taxon>Bacilli</taxon>
        <taxon>Lactobacillales</taxon>
        <taxon>Lactobacillaceae</taxon>
        <taxon>Lacticaseibacillus</taxon>
    </lineage>
</organism>
<dbReference type="EC" id="6.1.1.17" evidence="1"/>
<dbReference type="EMBL" id="FM177140">
    <property type="protein sequence ID" value="CAQ67558.1"/>
    <property type="molecule type" value="Genomic_DNA"/>
</dbReference>
<dbReference type="SMR" id="B3WA39"/>
<dbReference type="KEGG" id="lcb:LCABL_24920"/>
<dbReference type="HOGENOM" id="CLU_015768_6_1_9"/>
<dbReference type="GO" id="GO:0005829">
    <property type="term" value="C:cytosol"/>
    <property type="evidence" value="ECO:0007669"/>
    <property type="project" value="TreeGrafter"/>
</dbReference>
<dbReference type="GO" id="GO:0005524">
    <property type="term" value="F:ATP binding"/>
    <property type="evidence" value="ECO:0007669"/>
    <property type="project" value="UniProtKB-UniRule"/>
</dbReference>
<dbReference type="GO" id="GO:0004818">
    <property type="term" value="F:glutamate-tRNA ligase activity"/>
    <property type="evidence" value="ECO:0007669"/>
    <property type="project" value="UniProtKB-UniRule"/>
</dbReference>
<dbReference type="GO" id="GO:0000049">
    <property type="term" value="F:tRNA binding"/>
    <property type="evidence" value="ECO:0007669"/>
    <property type="project" value="InterPro"/>
</dbReference>
<dbReference type="GO" id="GO:0008270">
    <property type="term" value="F:zinc ion binding"/>
    <property type="evidence" value="ECO:0007669"/>
    <property type="project" value="InterPro"/>
</dbReference>
<dbReference type="GO" id="GO:0006424">
    <property type="term" value="P:glutamyl-tRNA aminoacylation"/>
    <property type="evidence" value="ECO:0007669"/>
    <property type="project" value="UniProtKB-UniRule"/>
</dbReference>
<dbReference type="CDD" id="cd00808">
    <property type="entry name" value="GluRS_core"/>
    <property type="match status" value="1"/>
</dbReference>
<dbReference type="FunFam" id="3.40.50.620:FF:000007">
    <property type="entry name" value="Glutamate--tRNA ligase"/>
    <property type="match status" value="1"/>
</dbReference>
<dbReference type="Gene3D" id="1.10.10.350">
    <property type="match status" value="1"/>
</dbReference>
<dbReference type="Gene3D" id="3.40.50.620">
    <property type="entry name" value="HUPs"/>
    <property type="match status" value="1"/>
</dbReference>
<dbReference type="HAMAP" id="MF_00022">
    <property type="entry name" value="Glu_tRNA_synth_type1"/>
    <property type="match status" value="1"/>
</dbReference>
<dbReference type="InterPro" id="IPR045462">
    <property type="entry name" value="aa-tRNA-synth_I_cd-bd"/>
</dbReference>
<dbReference type="InterPro" id="IPR020751">
    <property type="entry name" value="aa-tRNA-synth_I_codon-bd_sub2"/>
</dbReference>
<dbReference type="InterPro" id="IPR001412">
    <property type="entry name" value="aa-tRNA-synth_I_CS"/>
</dbReference>
<dbReference type="InterPro" id="IPR008925">
    <property type="entry name" value="aa_tRNA-synth_I_cd-bd_sf"/>
</dbReference>
<dbReference type="InterPro" id="IPR004527">
    <property type="entry name" value="Glu-tRNA-ligase_bac/mito"/>
</dbReference>
<dbReference type="InterPro" id="IPR000924">
    <property type="entry name" value="Glu/Gln-tRNA-synth"/>
</dbReference>
<dbReference type="InterPro" id="IPR020058">
    <property type="entry name" value="Glu/Gln-tRNA-synth_Ib_cat-dom"/>
</dbReference>
<dbReference type="InterPro" id="IPR049940">
    <property type="entry name" value="GluQ/Sye"/>
</dbReference>
<dbReference type="InterPro" id="IPR033910">
    <property type="entry name" value="GluRS_core"/>
</dbReference>
<dbReference type="InterPro" id="IPR014729">
    <property type="entry name" value="Rossmann-like_a/b/a_fold"/>
</dbReference>
<dbReference type="NCBIfam" id="TIGR00464">
    <property type="entry name" value="gltX_bact"/>
    <property type="match status" value="1"/>
</dbReference>
<dbReference type="PANTHER" id="PTHR43311">
    <property type="entry name" value="GLUTAMATE--TRNA LIGASE"/>
    <property type="match status" value="1"/>
</dbReference>
<dbReference type="PANTHER" id="PTHR43311:SF2">
    <property type="entry name" value="GLUTAMATE--TRNA LIGASE, MITOCHONDRIAL-RELATED"/>
    <property type="match status" value="1"/>
</dbReference>
<dbReference type="Pfam" id="PF19269">
    <property type="entry name" value="Anticodon_2"/>
    <property type="match status" value="1"/>
</dbReference>
<dbReference type="Pfam" id="PF00749">
    <property type="entry name" value="tRNA-synt_1c"/>
    <property type="match status" value="1"/>
</dbReference>
<dbReference type="PRINTS" id="PR00987">
    <property type="entry name" value="TRNASYNTHGLU"/>
</dbReference>
<dbReference type="SUPFAM" id="SSF48163">
    <property type="entry name" value="An anticodon-binding domain of class I aminoacyl-tRNA synthetases"/>
    <property type="match status" value="1"/>
</dbReference>
<dbReference type="SUPFAM" id="SSF52374">
    <property type="entry name" value="Nucleotidylyl transferase"/>
    <property type="match status" value="1"/>
</dbReference>
<dbReference type="PROSITE" id="PS00178">
    <property type="entry name" value="AA_TRNA_LIGASE_I"/>
    <property type="match status" value="1"/>
</dbReference>
<keyword id="KW-0030">Aminoacyl-tRNA synthetase</keyword>
<keyword id="KW-0067">ATP-binding</keyword>
<keyword id="KW-0963">Cytoplasm</keyword>
<keyword id="KW-0436">Ligase</keyword>
<keyword id="KW-0547">Nucleotide-binding</keyword>
<keyword id="KW-0648">Protein biosynthesis</keyword>
<feature type="chain" id="PRO_1000090082" description="Glutamate--tRNA ligase">
    <location>
        <begin position="1"/>
        <end position="497"/>
    </location>
</feature>
<feature type="short sequence motif" description="'HIGH' region" evidence="1">
    <location>
        <begin position="12"/>
        <end position="22"/>
    </location>
</feature>
<feature type="short sequence motif" description="'KMSKS' region" evidence="1">
    <location>
        <begin position="259"/>
        <end position="263"/>
    </location>
</feature>
<feature type="binding site" evidence="1">
    <location>
        <position position="262"/>
    </location>
    <ligand>
        <name>ATP</name>
        <dbReference type="ChEBI" id="CHEBI:30616"/>
    </ligand>
</feature>
<proteinExistence type="inferred from homology"/>
<protein>
    <recommendedName>
        <fullName evidence="1">Glutamate--tRNA ligase</fullName>
        <ecNumber evidence="1">6.1.1.17</ecNumber>
    </recommendedName>
    <alternativeName>
        <fullName evidence="1">Glutamyl-tRNA synthetase</fullName>
        <shortName evidence="1">GluRS</shortName>
    </alternativeName>
</protein>
<sequence>MADRPIRVRYAPSPTGHLHIGNARTALFNYLFARHNNGTLVLRIEDTDTKRNVADGEKSQMENLHWLGIDWDEGPDKGGDFGPYRQSERKDIYDKLIKQLVDKGFAYESYRTEEELKADREAQKARHEMPHYEYEYEGMTDAEKADAIAAAKAKGLEPVIRFHIPMDKTYEWDDIVKGKISIDANTLGGDFVIQKRDGMPTYNFAVVVDDHMMQISHVLRGDDHIANTPKQLAIYDAFGWEPPIFGHMTLIINGATGKKLSKRDETVLQFIEQYRELGYLPDAMFNFITLLGWSPVGEDEIFTKKEFIKQFDPKRLSKSPARFDQKKLEWVNNQYIKAKQKTNPNELMSLSLANLIEDGKIHSDPDPKTIEWARQLISLYTDQMSYTAQISKLADIFFDKATDLTDDERKELADDNAKPVIEAFAKKIRALDTFDAYSIGGIVNEVKQETKVKGRKLYMPIRIAATLRMHGPQLAETIELMGRDQVLKNVDLVTGQL</sequence>
<gene>
    <name evidence="1" type="primary">gltX</name>
    <name type="ordered locus">LCABL_24920</name>
</gene>
<name>SYE_LACCB</name>